<evidence type="ECO:0000255" key="1">
    <source>
        <dbReference type="HAMAP-Rule" id="MF_00502"/>
    </source>
</evidence>
<evidence type="ECO:0000305" key="2"/>
<protein>
    <recommendedName>
        <fullName evidence="1">Large ribosomal subunit protein bL31B</fullName>
    </recommendedName>
    <alternativeName>
        <fullName evidence="2">50S ribosomal protein L31 type B</fullName>
    </alternativeName>
</protein>
<feature type="chain" id="PRO_1000126805" description="Large ribosomal subunit protein bL31B">
    <location>
        <begin position="1"/>
        <end position="87"/>
    </location>
</feature>
<gene>
    <name evidence="1" type="primary">rpmE2</name>
    <name type="ordered locus">ECDH10B_0285</name>
</gene>
<dbReference type="EMBL" id="CP000948">
    <property type="protein sequence ID" value="ACB01463.1"/>
    <property type="molecule type" value="Genomic_DNA"/>
</dbReference>
<dbReference type="RefSeq" id="WP_000803998.1">
    <property type="nucleotide sequence ID" value="NC_010473.1"/>
</dbReference>
<dbReference type="SMR" id="B1XE39"/>
<dbReference type="KEGG" id="ecd:ECDH10B_0285"/>
<dbReference type="HOGENOM" id="CLU_114306_2_1_6"/>
<dbReference type="GO" id="GO:1990904">
    <property type="term" value="C:ribonucleoprotein complex"/>
    <property type="evidence" value="ECO:0007669"/>
    <property type="project" value="UniProtKB-KW"/>
</dbReference>
<dbReference type="GO" id="GO:0005840">
    <property type="term" value="C:ribosome"/>
    <property type="evidence" value="ECO:0007669"/>
    <property type="project" value="UniProtKB-KW"/>
</dbReference>
<dbReference type="GO" id="GO:0003735">
    <property type="term" value="F:structural constituent of ribosome"/>
    <property type="evidence" value="ECO:0007669"/>
    <property type="project" value="InterPro"/>
</dbReference>
<dbReference type="GO" id="GO:0006412">
    <property type="term" value="P:translation"/>
    <property type="evidence" value="ECO:0007669"/>
    <property type="project" value="UniProtKB-UniRule"/>
</dbReference>
<dbReference type="FunFam" id="4.10.830.30:FF:000002">
    <property type="entry name" value="50S ribosomal protein L31 type B"/>
    <property type="match status" value="1"/>
</dbReference>
<dbReference type="Gene3D" id="4.10.830.30">
    <property type="entry name" value="Ribosomal protein L31"/>
    <property type="match status" value="1"/>
</dbReference>
<dbReference type="HAMAP" id="MF_00502">
    <property type="entry name" value="Ribosomal_bL31_2"/>
    <property type="match status" value="1"/>
</dbReference>
<dbReference type="InterPro" id="IPR034704">
    <property type="entry name" value="Ribosomal_bL28/bL31-like_sf"/>
</dbReference>
<dbReference type="InterPro" id="IPR002150">
    <property type="entry name" value="Ribosomal_bL31"/>
</dbReference>
<dbReference type="InterPro" id="IPR027493">
    <property type="entry name" value="Ribosomal_bL31_B"/>
</dbReference>
<dbReference type="InterPro" id="IPR042105">
    <property type="entry name" value="Ribosomal_bL31_sf"/>
</dbReference>
<dbReference type="NCBIfam" id="TIGR00105">
    <property type="entry name" value="L31"/>
    <property type="match status" value="1"/>
</dbReference>
<dbReference type="NCBIfam" id="NF002462">
    <property type="entry name" value="PRK01678.1"/>
    <property type="match status" value="1"/>
</dbReference>
<dbReference type="PANTHER" id="PTHR33280">
    <property type="entry name" value="50S RIBOSOMAL PROTEIN L31, CHLOROPLASTIC"/>
    <property type="match status" value="1"/>
</dbReference>
<dbReference type="PANTHER" id="PTHR33280:SF1">
    <property type="entry name" value="LARGE RIBOSOMAL SUBUNIT PROTEIN BL31C"/>
    <property type="match status" value="1"/>
</dbReference>
<dbReference type="Pfam" id="PF01197">
    <property type="entry name" value="Ribosomal_L31"/>
    <property type="match status" value="1"/>
</dbReference>
<dbReference type="PRINTS" id="PR01249">
    <property type="entry name" value="RIBOSOMALL31"/>
</dbReference>
<dbReference type="SUPFAM" id="SSF143800">
    <property type="entry name" value="L28p-like"/>
    <property type="match status" value="1"/>
</dbReference>
<dbReference type="PROSITE" id="PS01143">
    <property type="entry name" value="RIBOSOMAL_L31"/>
    <property type="match status" value="1"/>
</dbReference>
<name>RL31B_ECODH</name>
<organism>
    <name type="scientific">Escherichia coli (strain K12 / DH10B)</name>
    <dbReference type="NCBI Taxonomy" id="316385"/>
    <lineage>
        <taxon>Bacteria</taxon>
        <taxon>Pseudomonadati</taxon>
        <taxon>Pseudomonadota</taxon>
        <taxon>Gammaproteobacteria</taxon>
        <taxon>Enterobacterales</taxon>
        <taxon>Enterobacteriaceae</taxon>
        <taxon>Escherichia</taxon>
    </lineage>
</organism>
<reference key="1">
    <citation type="journal article" date="2008" name="J. Bacteriol.">
        <title>The complete genome sequence of Escherichia coli DH10B: insights into the biology of a laboratory workhorse.</title>
        <authorList>
            <person name="Durfee T."/>
            <person name="Nelson R."/>
            <person name="Baldwin S."/>
            <person name="Plunkett G. III"/>
            <person name="Burland V."/>
            <person name="Mau B."/>
            <person name="Petrosino J.F."/>
            <person name="Qin X."/>
            <person name="Muzny D.M."/>
            <person name="Ayele M."/>
            <person name="Gibbs R.A."/>
            <person name="Csorgo B."/>
            <person name="Posfai G."/>
            <person name="Weinstock G.M."/>
            <person name="Blattner F.R."/>
        </authorList>
    </citation>
    <scope>NUCLEOTIDE SEQUENCE [LARGE SCALE GENOMIC DNA]</scope>
    <source>
        <strain>K12 / DH10B</strain>
    </source>
</reference>
<comment type="subunit">
    <text evidence="1">Part of the 50S ribosomal subunit.</text>
</comment>
<comment type="similarity">
    <text evidence="1">Belongs to the bacterial ribosomal protein bL31 family. Type B subfamily.</text>
</comment>
<keyword id="KW-0687">Ribonucleoprotein</keyword>
<keyword id="KW-0689">Ribosomal protein</keyword>
<accession>B1XE39</accession>
<proteinExistence type="inferred from homology"/>
<sequence>MKPNIHPEYRTVVFHDTSVDEYFKIGSTIKTDREIELDGVTYPYVTIDVSSKSHPFYTGKLRTVASEGNVARFTQRFGRFVSTKKGA</sequence>